<accession>Q8DV91</accession>
<protein>
    <recommendedName>
        <fullName evidence="1">Peptide chain release factor 3</fullName>
        <shortName evidence="1">RF-3</shortName>
    </recommendedName>
</protein>
<organism>
    <name type="scientific">Streptococcus mutans serotype c (strain ATCC 700610 / UA159)</name>
    <dbReference type="NCBI Taxonomy" id="210007"/>
    <lineage>
        <taxon>Bacteria</taxon>
        <taxon>Bacillati</taxon>
        <taxon>Bacillota</taxon>
        <taxon>Bacilli</taxon>
        <taxon>Lactobacillales</taxon>
        <taxon>Streptococcaceae</taxon>
        <taxon>Streptococcus</taxon>
    </lineage>
</organism>
<proteinExistence type="inferred from homology"/>
<name>RF3_STRMU</name>
<evidence type="ECO:0000255" key="1">
    <source>
        <dbReference type="HAMAP-Rule" id="MF_00072"/>
    </source>
</evidence>
<comment type="function">
    <text evidence="1">Increases the formation of ribosomal termination complexes and stimulates activities of RF-1 and RF-2. It binds guanine nucleotides and has strong preference for UGA stop codons. It may interact directly with the ribosome. The stimulation of RF-1 and RF-2 is significantly reduced by GTP and GDP, but not by GMP.</text>
</comment>
<comment type="subcellular location">
    <subcellularLocation>
        <location evidence="1">Cytoplasm</location>
    </subcellularLocation>
</comment>
<comment type="similarity">
    <text evidence="1">Belongs to the TRAFAC class translation factor GTPase superfamily. Classic translation factor GTPase family. PrfC subfamily.</text>
</comment>
<gene>
    <name evidence="1" type="primary">prfC</name>
    <name type="ordered locus">SMU_608</name>
</gene>
<keyword id="KW-0963">Cytoplasm</keyword>
<keyword id="KW-0342">GTP-binding</keyword>
<keyword id="KW-0547">Nucleotide-binding</keyword>
<keyword id="KW-0648">Protein biosynthesis</keyword>
<keyword id="KW-1185">Reference proteome</keyword>
<dbReference type="EMBL" id="AE014133">
    <property type="protein sequence ID" value="AAN58346.1"/>
    <property type="molecule type" value="Genomic_DNA"/>
</dbReference>
<dbReference type="RefSeq" id="NP_721040.1">
    <property type="nucleotide sequence ID" value="NC_004350.2"/>
</dbReference>
<dbReference type="RefSeq" id="WP_002263242.1">
    <property type="nucleotide sequence ID" value="NC_004350.2"/>
</dbReference>
<dbReference type="SMR" id="Q8DV91"/>
<dbReference type="STRING" id="210007.SMU_608"/>
<dbReference type="KEGG" id="smu:SMU_608"/>
<dbReference type="PATRIC" id="fig|210007.7.peg.540"/>
<dbReference type="eggNOG" id="COG4108">
    <property type="taxonomic scope" value="Bacteria"/>
</dbReference>
<dbReference type="HOGENOM" id="CLU_002794_2_1_9"/>
<dbReference type="OrthoDB" id="9804431at2"/>
<dbReference type="PhylomeDB" id="Q8DV91"/>
<dbReference type="Proteomes" id="UP000002512">
    <property type="component" value="Chromosome"/>
</dbReference>
<dbReference type="GO" id="GO:0005829">
    <property type="term" value="C:cytosol"/>
    <property type="evidence" value="ECO:0007669"/>
    <property type="project" value="TreeGrafter"/>
</dbReference>
<dbReference type="GO" id="GO:0005525">
    <property type="term" value="F:GTP binding"/>
    <property type="evidence" value="ECO:0007669"/>
    <property type="project" value="UniProtKB-UniRule"/>
</dbReference>
<dbReference type="GO" id="GO:0003924">
    <property type="term" value="F:GTPase activity"/>
    <property type="evidence" value="ECO:0007669"/>
    <property type="project" value="InterPro"/>
</dbReference>
<dbReference type="GO" id="GO:0016150">
    <property type="term" value="F:translation release factor activity, codon nonspecific"/>
    <property type="evidence" value="ECO:0007669"/>
    <property type="project" value="TreeGrafter"/>
</dbReference>
<dbReference type="GO" id="GO:0016149">
    <property type="term" value="F:translation release factor activity, codon specific"/>
    <property type="evidence" value="ECO:0007669"/>
    <property type="project" value="UniProtKB-UniRule"/>
</dbReference>
<dbReference type="GO" id="GO:0006449">
    <property type="term" value="P:regulation of translational termination"/>
    <property type="evidence" value="ECO:0007669"/>
    <property type="project" value="UniProtKB-UniRule"/>
</dbReference>
<dbReference type="CDD" id="cd04169">
    <property type="entry name" value="RF3"/>
    <property type="match status" value="1"/>
</dbReference>
<dbReference type="CDD" id="cd16259">
    <property type="entry name" value="RF3_III"/>
    <property type="match status" value="1"/>
</dbReference>
<dbReference type="FunFam" id="2.40.30.10:FF:000040">
    <property type="entry name" value="Peptide chain release factor 3"/>
    <property type="match status" value="1"/>
</dbReference>
<dbReference type="FunFam" id="3.30.70.3280:FF:000001">
    <property type="entry name" value="Peptide chain release factor 3"/>
    <property type="match status" value="1"/>
</dbReference>
<dbReference type="FunFam" id="3.40.50.300:FF:000542">
    <property type="entry name" value="Peptide chain release factor 3"/>
    <property type="match status" value="1"/>
</dbReference>
<dbReference type="Gene3D" id="3.40.50.300">
    <property type="entry name" value="P-loop containing nucleotide triphosphate hydrolases"/>
    <property type="match status" value="1"/>
</dbReference>
<dbReference type="Gene3D" id="3.30.70.3280">
    <property type="entry name" value="Peptide chain release factor 3, domain III"/>
    <property type="match status" value="1"/>
</dbReference>
<dbReference type="Gene3D" id="2.40.30.10">
    <property type="entry name" value="Translation factors"/>
    <property type="match status" value="1"/>
</dbReference>
<dbReference type="HAMAP" id="MF_00072">
    <property type="entry name" value="Rel_fac_3"/>
    <property type="match status" value="1"/>
</dbReference>
<dbReference type="InterPro" id="IPR053905">
    <property type="entry name" value="EF-G-like_DII"/>
</dbReference>
<dbReference type="InterPro" id="IPR035647">
    <property type="entry name" value="EFG_III/V"/>
</dbReference>
<dbReference type="InterPro" id="IPR031157">
    <property type="entry name" value="G_TR_CS"/>
</dbReference>
<dbReference type="InterPro" id="IPR027417">
    <property type="entry name" value="P-loop_NTPase"/>
</dbReference>
<dbReference type="InterPro" id="IPR004548">
    <property type="entry name" value="PrfC"/>
</dbReference>
<dbReference type="InterPro" id="IPR032090">
    <property type="entry name" value="RF3_C"/>
</dbReference>
<dbReference type="InterPro" id="IPR038467">
    <property type="entry name" value="RF3_dom_3_sf"/>
</dbReference>
<dbReference type="InterPro" id="IPR041732">
    <property type="entry name" value="RF3_GTP-bd"/>
</dbReference>
<dbReference type="InterPro" id="IPR005225">
    <property type="entry name" value="Small_GTP-bd"/>
</dbReference>
<dbReference type="InterPro" id="IPR000795">
    <property type="entry name" value="T_Tr_GTP-bd_dom"/>
</dbReference>
<dbReference type="InterPro" id="IPR009000">
    <property type="entry name" value="Transl_B-barrel_sf"/>
</dbReference>
<dbReference type="NCBIfam" id="TIGR00503">
    <property type="entry name" value="prfC"/>
    <property type="match status" value="1"/>
</dbReference>
<dbReference type="NCBIfam" id="NF001964">
    <property type="entry name" value="PRK00741.1"/>
    <property type="match status" value="1"/>
</dbReference>
<dbReference type="NCBIfam" id="TIGR00231">
    <property type="entry name" value="small_GTP"/>
    <property type="match status" value="1"/>
</dbReference>
<dbReference type="PANTHER" id="PTHR43556">
    <property type="entry name" value="PEPTIDE CHAIN RELEASE FACTOR RF3"/>
    <property type="match status" value="1"/>
</dbReference>
<dbReference type="PANTHER" id="PTHR43556:SF2">
    <property type="entry name" value="PEPTIDE CHAIN RELEASE FACTOR RF3"/>
    <property type="match status" value="1"/>
</dbReference>
<dbReference type="Pfam" id="PF22042">
    <property type="entry name" value="EF-G_D2"/>
    <property type="match status" value="1"/>
</dbReference>
<dbReference type="Pfam" id="PF00009">
    <property type="entry name" value="GTP_EFTU"/>
    <property type="match status" value="1"/>
</dbReference>
<dbReference type="Pfam" id="PF16658">
    <property type="entry name" value="RF3_C"/>
    <property type="match status" value="1"/>
</dbReference>
<dbReference type="PRINTS" id="PR00315">
    <property type="entry name" value="ELONGATNFCT"/>
</dbReference>
<dbReference type="PRINTS" id="PR01037">
    <property type="entry name" value="TCRTETOQM"/>
</dbReference>
<dbReference type="SUPFAM" id="SSF54980">
    <property type="entry name" value="EF-G C-terminal domain-like"/>
    <property type="match status" value="1"/>
</dbReference>
<dbReference type="SUPFAM" id="SSF52540">
    <property type="entry name" value="P-loop containing nucleoside triphosphate hydrolases"/>
    <property type="match status" value="1"/>
</dbReference>
<dbReference type="SUPFAM" id="SSF50447">
    <property type="entry name" value="Translation proteins"/>
    <property type="match status" value="1"/>
</dbReference>
<dbReference type="PROSITE" id="PS00301">
    <property type="entry name" value="G_TR_1"/>
    <property type="match status" value="1"/>
</dbReference>
<dbReference type="PROSITE" id="PS51722">
    <property type="entry name" value="G_TR_2"/>
    <property type="match status" value="1"/>
</dbReference>
<feature type="chain" id="PRO_0000210971" description="Peptide chain release factor 3">
    <location>
        <begin position="1"/>
        <end position="514"/>
    </location>
</feature>
<feature type="domain" description="tr-type G">
    <location>
        <begin position="8"/>
        <end position="268"/>
    </location>
</feature>
<feature type="binding site" evidence="1">
    <location>
        <begin position="17"/>
        <end position="24"/>
    </location>
    <ligand>
        <name>GTP</name>
        <dbReference type="ChEBI" id="CHEBI:37565"/>
    </ligand>
</feature>
<feature type="binding site" evidence="1">
    <location>
        <begin position="85"/>
        <end position="89"/>
    </location>
    <ligand>
        <name>GTP</name>
        <dbReference type="ChEBI" id="CHEBI:37565"/>
    </ligand>
</feature>
<feature type="binding site" evidence="1">
    <location>
        <begin position="139"/>
        <end position="142"/>
    </location>
    <ligand>
        <name>GTP</name>
        <dbReference type="ChEBI" id="CHEBI:37565"/>
    </ligand>
</feature>
<reference key="1">
    <citation type="journal article" date="2002" name="Proc. Natl. Acad. Sci. U.S.A.">
        <title>Genome sequence of Streptococcus mutans UA159, a cariogenic dental pathogen.</title>
        <authorList>
            <person name="Ajdic D.J."/>
            <person name="McShan W.M."/>
            <person name="McLaughlin R.E."/>
            <person name="Savic G."/>
            <person name="Chang J."/>
            <person name="Carson M.B."/>
            <person name="Primeaux C."/>
            <person name="Tian R."/>
            <person name="Kenton S."/>
            <person name="Jia H.G."/>
            <person name="Lin S.P."/>
            <person name="Qian Y."/>
            <person name="Li S."/>
            <person name="Zhu H."/>
            <person name="Najar F.Z."/>
            <person name="Lai H."/>
            <person name="White J."/>
            <person name="Roe B.A."/>
            <person name="Ferretti J.J."/>
        </authorList>
    </citation>
    <scope>NUCLEOTIDE SEQUENCE [LARGE SCALE GENOMIC DNA]</scope>
    <source>
        <strain>ATCC 700610 / UA159</strain>
    </source>
</reference>
<sequence>MNLQEEIKKRRTFAIISHPDAGKTTITEQLLYFGGEIREAGTVKGKKTGNFAKSDWMDIEKQRGISVTSSVMQFDYAGKRVNILDTPGHEDFSEDTYRTLMAVDAAVMVVDSAKGIEAQTKKLFEVVKHRGIPIFTFINKLDRDGREPLDLLEELEEVLGIASYPMNWPIGMGRSFEGLYDLYNQRLELYKGDERFASIEDGDKLFANNPFYEQAKEDIELLTEAGNEFSEEAILKGELTPVFFGSALTNFGVQTFLDSFLAFAPEPHGHKTTDDKVIDPLDKDFSGFVFKIQANMDPRHRDRIAFVRIVSGEFERGMSVNLARTGKSVKLSNVTQFMAESRENVENAVAGDIIGVYDTGTYQVGDTLTVGKNKFEFEPLPTFTPELFMKVSAKNVMKQKSFHKGIEQLVQEGAIQLYTNYQTGEYMLGAVGQLQFEVFKHRMENEYNAEVIMTPMGKKTVRWIKEEDLDERMSSSRNILAKDRFNKPVFLFENDFSLHWFADKYPDIVLEEKM</sequence>